<name>RHAD_ECOL5</name>
<sequence length="274" mass="30159">MQNITQSWFVQGMIKATTDAWLKGWDERNGGNLTLRLDDADIAPYHDNFHQQPRYIPLSQPMPLLANTPFIVTGSGKFFRNVQLDPAANLGIVKVDSDGAGYHILWGLTNEAVPTSELPAHFLSHCERIKATNGKDRVIMHCHATNLIALTYVLENDTAVFTRQLWEGSTECLVVFPDGVGILPWMVPGTDEIGQATAQEMQKHSLVLWPFHGVFGSGPTLDETFGLIDTAEKSAQILVKVYSMGGMKQTISREELIALGQRFGVTPLASALAL</sequence>
<proteinExistence type="inferred from homology"/>
<dbReference type="EC" id="4.1.2.19" evidence="1"/>
<dbReference type="EMBL" id="CP000247">
    <property type="protein sequence ID" value="ABG72068.1"/>
    <property type="molecule type" value="Genomic_DNA"/>
</dbReference>
<dbReference type="RefSeq" id="WP_001179744.1">
    <property type="nucleotide sequence ID" value="NC_008253.1"/>
</dbReference>
<dbReference type="SMR" id="Q0TAG1"/>
<dbReference type="KEGG" id="ecp:ECP_4112"/>
<dbReference type="HOGENOM" id="CLU_076831_0_0_6"/>
<dbReference type="UniPathway" id="UPA00541">
    <property type="reaction ID" value="UER00603"/>
</dbReference>
<dbReference type="Proteomes" id="UP000009182">
    <property type="component" value="Chromosome"/>
</dbReference>
<dbReference type="GO" id="GO:0005829">
    <property type="term" value="C:cytosol"/>
    <property type="evidence" value="ECO:0007669"/>
    <property type="project" value="TreeGrafter"/>
</dbReference>
<dbReference type="GO" id="GO:0046872">
    <property type="term" value="F:metal ion binding"/>
    <property type="evidence" value="ECO:0007669"/>
    <property type="project" value="UniProtKB-KW"/>
</dbReference>
<dbReference type="GO" id="GO:0008994">
    <property type="term" value="F:rhamnulose-1-phosphate aldolase activity"/>
    <property type="evidence" value="ECO:0007669"/>
    <property type="project" value="UniProtKB-UniRule"/>
</dbReference>
<dbReference type="GO" id="GO:0019323">
    <property type="term" value="P:pentose catabolic process"/>
    <property type="evidence" value="ECO:0007669"/>
    <property type="project" value="TreeGrafter"/>
</dbReference>
<dbReference type="GO" id="GO:0019301">
    <property type="term" value="P:rhamnose catabolic process"/>
    <property type="evidence" value="ECO:0007669"/>
    <property type="project" value="UniProtKB-UniRule"/>
</dbReference>
<dbReference type="CDD" id="cd00398">
    <property type="entry name" value="Aldolase_II"/>
    <property type="match status" value="1"/>
</dbReference>
<dbReference type="FunFam" id="3.40.225.10:FF:000006">
    <property type="entry name" value="Rhamnulose-1-phosphate aldolase"/>
    <property type="match status" value="1"/>
</dbReference>
<dbReference type="Gene3D" id="3.40.225.10">
    <property type="entry name" value="Class II aldolase/adducin N-terminal domain"/>
    <property type="match status" value="1"/>
</dbReference>
<dbReference type="HAMAP" id="MF_00770">
    <property type="entry name" value="RhaD"/>
    <property type="match status" value="1"/>
</dbReference>
<dbReference type="InterPro" id="IPR050197">
    <property type="entry name" value="Aldolase_class_II_sugar_metab"/>
</dbReference>
<dbReference type="InterPro" id="IPR001303">
    <property type="entry name" value="Aldolase_II/adducin_N"/>
</dbReference>
<dbReference type="InterPro" id="IPR036409">
    <property type="entry name" value="Aldolase_II/adducin_N_sf"/>
</dbReference>
<dbReference type="InterPro" id="IPR013447">
    <property type="entry name" value="Rhamnulose-1-P_Aldolase"/>
</dbReference>
<dbReference type="NCBIfam" id="NF002963">
    <property type="entry name" value="PRK03634.1"/>
    <property type="match status" value="1"/>
</dbReference>
<dbReference type="NCBIfam" id="TIGR02624">
    <property type="entry name" value="rhamnu_1P_ald"/>
    <property type="match status" value="1"/>
</dbReference>
<dbReference type="PANTHER" id="PTHR22789">
    <property type="entry name" value="FUCULOSE PHOSPHATE ALDOLASE"/>
    <property type="match status" value="1"/>
</dbReference>
<dbReference type="PANTHER" id="PTHR22789:SF16">
    <property type="entry name" value="RHAMNULOSE-1-PHOSPHATE ALDOLASE"/>
    <property type="match status" value="1"/>
</dbReference>
<dbReference type="Pfam" id="PF00596">
    <property type="entry name" value="Aldolase_II"/>
    <property type="match status" value="1"/>
</dbReference>
<dbReference type="SMART" id="SM01007">
    <property type="entry name" value="Aldolase_II"/>
    <property type="match status" value="1"/>
</dbReference>
<dbReference type="SUPFAM" id="SSF53639">
    <property type="entry name" value="AraD/HMP-PK domain-like"/>
    <property type="match status" value="1"/>
</dbReference>
<organism>
    <name type="scientific">Escherichia coli O6:K15:H31 (strain 536 / UPEC)</name>
    <dbReference type="NCBI Taxonomy" id="362663"/>
    <lineage>
        <taxon>Bacteria</taxon>
        <taxon>Pseudomonadati</taxon>
        <taxon>Pseudomonadota</taxon>
        <taxon>Gammaproteobacteria</taxon>
        <taxon>Enterobacterales</taxon>
        <taxon>Enterobacteriaceae</taxon>
        <taxon>Escherichia</taxon>
    </lineage>
</organism>
<accession>Q0TAG1</accession>
<reference key="1">
    <citation type="journal article" date="2006" name="Mol. Microbiol.">
        <title>Role of pathogenicity island-associated integrases in the genome plasticity of uropathogenic Escherichia coli strain 536.</title>
        <authorList>
            <person name="Hochhut B."/>
            <person name="Wilde C."/>
            <person name="Balling G."/>
            <person name="Middendorf B."/>
            <person name="Dobrindt U."/>
            <person name="Brzuszkiewicz E."/>
            <person name="Gottschalk G."/>
            <person name="Carniel E."/>
            <person name="Hacker J."/>
        </authorList>
    </citation>
    <scope>NUCLEOTIDE SEQUENCE [LARGE SCALE GENOMIC DNA]</scope>
    <source>
        <strain>536 / UPEC</strain>
    </source>
</reference>
<evidence type="ECO:0000255" key="1">
    <source>
        <dbReference type="HAMAP-Rule" id="MF_00770"/>
    </source>
</evidence>
<comment type="function">
    <text evidence="1">Catalyzes the reversible cleavage of L-rhamnulose-1-phosphate to dihydroxyacetone phosphate (DHAP) and L-lactaldehyde.</text>
</comment>
<comment type="catalytic activity">
    <reaction evidence="1">
        <text>L-rhamnulose 1-phosphate = (S)-lactaldehyde + dihydroxyacetone phosphate</text>
        <dbReference type="Rhea" id="RHEA:19689"/>
        <dbReference type="ChEBI" id="CHEBI:18041"/>
        <dbReference type="ChEBI" id="CHEBI:57642"/>
        <dbReference type="ChEBI" id="CHEBI:58313"/>
        <dbReference type="EC" id="4.1.2.19"/>
    </reaction>
</comment>
<comment type="cofactor">
    <cofactor evidence="1">
        <name>Zn(2+)</name>
        <dbReference type="ChEBI" id="CHEBI:29105"/>
    </cofactor>
    <text evidence="1">Binds 1 zinc ion per subunit.</text>
</comment>
<comment type="pathway">
    <text evidence="1">Carbohydrate degradation; L-rhamnose degradation; glycerone phosphate from L-rhamnose: step 3/3.</text>
</comment>
<comment type="subunit">
    <text evidence="1">Homotetramer.</text>
</comment>
<comment type="subcellular location">
    <subcellularLocation>
        <location evidence="1">Cytoplasm</location>
    </subcellularLocation>
</comment>
<comment type="similarity">
    <text evidence="1">Belongs to the aldolase class II family. RhaD subfamily.</text>
</comment>
<protein>
    <recommendedName>
        <fullName evidence="1">Rhamnulose-1-phosphate aldolase</fullName>
        <ecNumber evidence="1">4.1.2.19</ecNumber>
    </recommendedName>
</protein>
<keyword id="KW-0963">Cytoplasm</keyword>
<keyword id="KW-0456">Lyase</keyword>
<keyword id="KW-0479">Metal-binding</keyword>
<keyword id="KW-0684">Rhamnose metabolism</keyword>
<keyword id="KW-0862">Zinc</keyword>
<feature type="chain" id="PRO_1000017338" description="Rhamnulose-1-phosphate aldolase">
    <location>
        <begin position="1"/>
        <end position="274"/>
    </location>
</feature>
<feature type="active site" evidence="1">
    <location>
        <position position="117"/>
    </location>
</feature>
<feature type="binding site" evidence="1">
    <location>
        <position position="141"/>
    </location>
    <ligand>
        <name>Zn(2+)</name>
        <dbReference type="ChEBI" id="CHEBI:29105"/>
    </ligand>
</feature>
<feature type="binding site" evidence="1">
    <location>
        <position position="143"/>
    </location>
    <ligand>
        <name>Zn(2+)</name>
        <dbReference type="ChEBI" id="CHEBI:29105"/>
    </ligand>
</feature>
<feature type="binding site" evidence="1">
    <location>
        <position position="212"/>
    </location>
    <ligand>
        <name>Zn(2+)</name>
        <dbReference type="ChEBI" id="CHEBI:29105"/>
    </ligand>
</feature>
<gene>
    <name evidence="1" type="primary">rhaD</name>
    <name type="ordered locus">ECP_4112</name>
</gene>